<gene>
    <name evidence="1" type="primary">rpmC</name>
    <name evidence="1" type="synonym">rpl29</name>
    <name type="ordered locus">cce_4022</name>
</gene>
<comment type="similarity">
    <text evidence="1">Belongs to the universal ribosomal protein uL29 family.</text>
</comment>
<evidence type="ECO:0000255" key="1">
    <source>
        <dbReference type="HAMAP-Rule" id="MF_00374"/>
    </source>
</evidence>
<evidence type="ECO:0000305" key="2"/>
<dbReference type="EMBL" id="CP000806">
    <property type="protein sequence ID" value="ACB53370.1"/>
    <property type="molecule type" value="Genomic_DNA"/>
</dbReference>
<dbReference type="RefSeq" id="WP_009543888.1">
    <property type="nucleotide sequence ID" value="NC_010546.1"/>
</dbReference>
<dbReference type="SMR" id="B1WQR8"/>
<dbReference type="STRING" id="43989.cce_4022"/>
<dbReference type="KEGG" id="cyt:cce_4022"/>
<dbReference type="eggNOG" id="COG0255">
    <property type="taxonomic scope" value="Bacteria"/>
</dbReference>
<dbReference type="HOGENOM" id="CLU_158491_0_0_3"/>
<dbReference type="OrthoDB" id="9815192at2"/>
<dbReference type="Proteomes" id="UP000001203">
    <property type="component" value="Chromosome circular"/>
</dbReference>
<dbReference type="GO" id="GO:0022625">
    <property type="term" value="C:cytosolic large ribosomal subunit"/>
    <property type="evidence" value="ECO:0007669"/>
    <property type="project" value="TreeGrafter"/>
</dbReference>
<dbReference type="GO" id="GO:0003735">
    <property type="term" value="F:structural constituent of ribosome"/>
    <property type="evidence" value="ECO:0007669"/>
    <property type="project" value="InterPro"/>
</dbReference>
<dbReference type="GO" id="GO:0006412">
    <property type="term" value="P:translation"/>
    <property type="evidence" value="ECO:0007669"/>
    <property type="project" value="UniProtKB-UniRule"/>
</dbReference>
<dbReference type="CDD" id="cd00427">
    <property type="entry name" value="Ribosomal_L29_HIP"/>
    <property type="match status" value="1"/>
</dbReference>
<dbReference type="FunFam" id="1.10.287.310:FF:000005">
    <property type="entry name" value="50S ribosomal protein L29"/>
    <property type="match status" value="1"/>
</dbReference>
<dbReference type="Gene3D" id="1.10.287.310">
    <property type="match status" value="1"/>
</dbReference>
<dbReference type="HAMAP" id="MF_00374">
    <property type="entry name" value="Ribosomal_uL29"/>
    <property type="match status" value="1"/>
</dbReference>
<dbReference type="InterPro" id="IPR050063">
    <property type="entry name" value="Ribosomal_protein_uL29"/>
</dbReference>
<dbReference type="InterPro" id="IPR001854">
    <property type="entry name" value="Ribosomal_uL29"/>
</dbReference>
<dbReference type="InterPro" id="IPR036049">
    <property type="entry name" value="Ribosomal_uL29_sf"/>
</dbReference>
<dbReference type="NCBIfam" id="TIGR00012">
    <property type="entry name" value="L29"/>
    <property type="match status" value="1"/>
</dbReference>
<dbReference type="PANTHER" id="PTHR10916">
    <property type="entry name" value="60S RIBOSOMAL PROTEIN L35/50S RIBOSOMAL PROTEIN L29"/>
    <property type="match status" value="1"/>
</dbReference>
<dbReference type="PANTHER" id="PTHR10916:SF0">
    <property type="entry name" value="LARGE RIBOSOMAL SUBUNIT PROTEIN UL29C"/>
    <property type="match status" value="1"/>
</dbReference>
<dbReference type="Pfam" id="PF00831">
    <property type="entry name" value="Ribosomal_L29"/>
    <property type="match status" value="1"/>
</dbReference>
<dbReference type="SUPFAM" id="SSF46561">
    <property type="entry name" value="Ribosomal protein L29 (L29p)"/>
    <property type="match status" value="1"/>
</dbReference>
<sequence length="78" mass="9235">MALPKIEEVRQLSDEELAEEIIATKRELFDLRFQQATRQLENTHEFKHTRHRMAQLLTIERERQLNINQSSSTSAEEA</sequence>
<accession>B1WQR8</accession>
<reference key="1">
    <citation type="journal article" date="2008" name="Proc. Natl. Acad. Sci. U.S.A.">
        <title>The genome of Cyanothece 51142, a unicellular diazotrophic cyanobacterium important in the marine nitrogen cycle.</title>
        <authorList>
            <person name="Welsh E.A."/>
            <person name="Liberton M."/>
            <person name="Stoeckel J."/>
            <person name="Loh T."/>
            <person name="Elvitigala T."/>
            <person name="Wang C."/>
            <person name="Wollam A."/>
            <person name="Fulton R.S."/>
            <person name="Clifton S.W."/>
            <person name="Jacobs J.M."/>
            <person name="Aurora R."/>
            <person name="Ghosh B.K."/>
            <person name="Sherman L.A."/>
            <person name="Smith R.D."/>
            <person name="Wilson R.K."/>
            <person name="Pakrasi H.B."/>
        </authorList>
    </citation>
    <scope>NUCLEOTIDE SEQUENCE [LARGE SCALE GENOMIC DNA]</scope>
    <source>
        <strain>ATCC 51142 / BH68</strain>
    </source>
</reference>
<protein>
    <recommendedName>
        <fullName evidence="1">Large ribosomal subunit protein uL29</fullName>
    </recommendedName>
    <alternativeName>
        <fullName evidence="2">50S ribosomal protein L29</fullName>
    </alternativeName>
</protein>
<name>RL29_CROS5</name>
<keyword id="KW-1185">Reference proteome</keyword>
<keyword id="KW-0687">Ribonucleoprotein</keyword>
<keyword id="KW-0689">Ribosomal protein</keyword>
<proteinExistence type="inferred from homology"/>
<organism>
    <name type="scientific">Crocosphaera subtropica (strain ATCC 51142 / BH68)</name>
    <name type="common">Cyanothece sp. (strain ATCC 51142)</name>
    <dbReference type="NCBI Taxonomy" id="43989"/>
    <lineage>
        <taxon>Bacteria</taxon>
        <taxon>Bacillati</taxon>
        <taxon>Cyanobacteriota</taxon>
        <taxon>Cyanophyceae</taxon>
        <taxon>Oscillatoriophycideae</taxon>
        <taxon>Chroococcales</taxon>
        <taxon>Aphanothecaceae</taxon>
        <taxon>Crocosphaera</taxon>
        <taxon>Crocosphaera subtropica</taxon>
    </lineage>
</organism>
<feature type="chain" id="PRO_1000194010" description="Large ribosomal subunit protein uL29">
    <location>
        <begin position="1"/>
        <end position="78"/>
    </location>
</feature>